<comment type="subunit">
    <text evidence="1">Part of the 30S ribosomal subunit.</text>
</comment>
<comment type="subcellular location">
    <subcellularLocation>
        <location>Plastid</location>
        <location>Chloroplast</location>
    </subcellularLocation>
</comment>
<comment type="similarity">
    <text evidence="2">Belongs to the universal ribosomal protein uS15 family.</text>
</comment>
<feature type="chain" id="PRO_0000354279" description="Small ribosomal subunit protein uS15c">
    <location>
        <begin position="1"/>
        <end position="73"/>
    </location>
</feature>
<dbReference type="EMBL" id="EU342371">
    <property type="protein sequence ID" value="ABY26838.1"/>
    <property type="molecule type" value="Genomic_DNA"/>
</dbReference>
<dbReference type="EMBL" id="AP009568">
    <property type="protein sequence ID" value="BAH11180.1"/>
    <property type="molecule type" value="Genomic_DNA"/>
</dbReference>
<dbReference type="RefSeq" id="YP_001876625.1">
    <property type="nucleotide sequence ID" value="NC_010654.1"/>
</dbReference>
<dbReference type="SMR" id="B2Y208"/>
<dbReference type="GeneID" id="6276171"/>
<dbReference type="GO" id="GO:0009507">
    <property type="term" value="C:chloroplast"/>
    <property type="evidence" value="ECO:0007669"/>
    <property type="project" value="UniProtKB-SubCell"/>
</dbReference>
<dbReference type="GO" id="GO:1990904">
    <property type="term" value="C:ribonucleoprotein complex"/>
    <property type="evidence" value="ECO:0007669"/>
    <property type="project" value="UniProtKB-KW"/>
</dbReference>
<dbReference type="GO" id="GO:0005840">
    <property type="term" value="C:ribosome"/>
    <property type="evidence" value="ECO:0007669"/>
    <property type="project" value="UniProtKB-KW"/>
</dbReference>
<dbReference type="GO" id="GO:0003735">
    <property type="term" value="F:structural constituent of ribosome"/>
    <property type="evidence" value="ECO:0007669"/>
    <property type="project" value="InterPro"/>
</dbReference>
<dbReference type="GO" id="GO:0006412">
    <property type="term" value="P:translation"/>
    <property type="evidence" value="ECO:0007669"/>
    <property type="project" value="UniProtKB-UniRule"/>
</dbReference>
<dbReference type="Gene3D" id="1.10.287.10">
    <property type="entry name" value="S15/NS1, RNA-binding"/>
    <property type="match status" value="1"/>
</dbReference>
<dbReference type="HAMAP" id="MF_01343_B">
    <property type="entry name" value="Ribosomal_uS15_B"/>
    <property type="match status" value="1"/>
</dbReference>
<dbReference type="InterPro" id="IPR000589">
    <property type="entry name" value="Ribosomal_uS15"/>
</dbReference>
<dbReference type="InterPro" id="IPR005290">
    <property type="entry name" value="Ribosomal_uS15_bac-type"/>
</dbReference>
<dbReference type="InterPro" id="IPR009068">
    <property type="entry name" value="uS15_NS1_RNA-bd_sf"/>
</dbReference>
<dbReference type="PANTHER" id="PTHR23321">
    <property type="entry name" value="RIBOSOMAL PROTEIN S15, BACTERIAL AND ORGANELLAR"/>
    <property type="match status" value="1"/>
</dbReference>
<dbReference type="PANTHER" id="PTHR23321:SF26">
    <property type="entry name" value="SMALL RIBOSOMAL SUBUNIT PROTEIN US15M"/>
    <property type="match status" value="1"/>
</dbReference>
<dbReference type="Pfam" id="PF00312">
    <property type="entry name" value="Ribosomal_S15"/>
    <property type="match status" value="1"/>
</dbReference>
<dbReference type="SMART" id="SM01387">
    <property type="entry name" value="Ribosomal_S15"/>
    <property type="match status" value="1"/>
</dbReference>
<dbReference type="SUPFAM" id="SSF47060">
    <property type="entry name" value="S15/NS1 RNA-binding domain"/>
    <property type="match status" value="1"/>
</dbReference>
<reference key="1">
    <citation type="journal article" date="2008" name="BMC Evol. Biol.">
        <title>The complete plastid genome sequence of Welwitschia mirabilis: an unusually compact plastome with accelerated divergence rates.</title>
        <authorList>
            <person name="McCoy S.R."/>
            <person name="Kuehl J.V."/>
            <person name="Boore J.L."/>
            <person name="Raubeson L.A."/>
        </authorList>
    </citation>
    <scope>NUCLEOTIDE SEQUENCE [LARGE SCALE GENOMIC DNA]</scope>
</reference>
<reference key="2">
    <citation type="journal article" date="2009" name="Mol. Phylogenet. Evol.">
        <title>Evolution of reduced and compact chloroplast genomes (cpDNAs) in gnetophytes: Selection toward a lower-cost strategy.</title>
        <authorList>
            <person name="Wu C.-S."/>
            <person name="Lai Y.-T."/>
            <person name="Lin C.-P."/>
            <person name="Wang Y.-N."/>
            <person name="Chaw S.-M."/>
        </authorList>
    </citation>
    <scope>NUCLEOTIDE SEQUENCE [LARGE SCALE GENOMIC DNA]</scope>
</reference>
<accession>B2Y208</accession>
<accession>B7ZI00</accession>
<evidence type="ECO:0000250" key="1"/>
<evidence type="ECO:0000305" key="2"/>
<protein>
    <recommendedName>
        <fullName evidence="2">Small ribosomal subunit protein uS15c</fullName>
    </recommendedName>
    <alternativeName>
        <fullName>30S ribosomal protein S15, chloroplastic</fullName>
    </alternativeName>
</protein>
<sequence length="73" mass="8657">MTNMTNQISNNTGSVQSQVRFLTDRIQKLSRHLGTHKKDFSCQRSIRKLLIKRKRLLLYLYKKDKTGYNQVKS</sequence>
<gene>
    <name type="primary">rps15</name>
</gene>
<organism>
    <name type="scientific">Welwitschia mirabilis</name>
    <name type="common">Tree tumbo</name>
    <name type="synonym">Welwitschia bainesii</name>
    <dbReference type="NCBI Taxonomy" id="3377"/>
    <lineage>
        <taxon>Eukaryota</taxon>
        <taxon>Viridiplantae</taxon>
        <taxon>Streptophyta</taxon>
        <taxon>Embryophyta</taxon>
        <taxon>Tracheophyta</taxon>
        <taxon>Spermatophyta</taxon>
        <taxon>Gnetopsida</taxon>
        <taxon>Gnetidae</taxon>
        <taxon>Welwitschiales</taxon>
        <taxon>Welwitschiaceae</taxon>
        <taxon>Welwitschia</taxon>
    </lineage>
</organism>
<keyword id="KW-0150">Chloroplast</keyword>
<keyword id="KW-0934">Plastid</keyword>
<keyword id="KW-0687">Ribonucleoprotein</keyword>
<keyword id="KW-0689">Ribosomal protein</keyword>
<proteinExistence type="inferred from homology"/>
<geneLocation type="chloroplast"/>
<name>RR15_WELMI</name>